<keyword id="KW-0963">Cytoplasm</keyword>
<keyword id="KW-1185">Reference proteome</keyword>
<keyword id="KW-0810">Translation regulation</keyword>
<comment type="function">
    <text evidence="3">Involved in post-transcriptional regulation of gene expression (PubMed:24470144). Promotes mRNA stabilization by bridging poly(A)-binding protein to mRNAs (PubMed:24470144).</text>
</comment>
<comment type="subunit">
    <text evidence="3 4">Forms a complex composed of at least MKT1, PBP1, XAC1 and LSM12 (PubMed:32532821). Forms a complex composed of at least MKT1L, PBP1, XAC1 and LSM12 (PubMed:32532821). Within the complex, interacts with MKT1 (via C-terminus); the interaction is direct (PubMed:24470144, PubMed:32532821). Interacts (via C-terminus) with ZC3H11; the interaction is direct (PubMed:24470144).</text>
</comment>
<comment type="subcellular location">
    <subcellularLocation>
        <location evidence="3">Cytoplasm</location>
        <location evidence="3">Cytosol</location>
    </subcellularLocation>
    <subcellularLocation>
        <location evidence="3">Cytoplasm</location>
        <location evidence="3">Stress granule</location>
    </subcellularLocation>
    <text evidence="3">Localizes to polysomes (PubMed:24470144). Localizes to starvation-induced stress granules but not heat shock-induced stress granules (PubMed:24470144).</text>
</comment>
<comment type="developmental stage">
    <text evidence="3">Expressed in the procyclic and bloodstream forms (at protein level).</text>
</comment>
<comment type="similarity">
    <text evidence="7">Belongs to the ataxin-2 family.</text>
</comment>
<protein>
    <recommendedName>
        <fullName evidence="5">PAB1-binding protein 1</fullName>
    </recommendedName>
    <alternativeName>
        <fullName evidence="7">Ataxin-2 homolog</fullName>
    </alternativeName>
    <alternativeName>
        <fullName evidence="7">Poly(A)-binding protein-binding protein</fullName>
    </alternativeName>
</protein>
<proteinExistence type="evidence at protein level"/>
<feature type="chain" id="PRO_0000451927" description="PAB1-binding protein 1">
    <location>
        <begin position="1"/>
        <end position="550"/>
    </location>
</feature>
<feature type="domain" description="Sm" evidence="1">
    <location>
        <begin position="11"/>
        <end position="95"/>
    </location>
</feature>
<feature type="region of interest" description="Disordered" evidence="2">
    <location>
        <begin position="201"/>
        <end position="296"/>
    </location>
</feature>
<feature type="region of interest" description="Disordered" evidence="2">
    <location>
        <begin position="441"/>
        <end position="550"/>
    </location>
</feature>
<feature type="compositionally biased region" description="Basic and acidic residues" evidence="2">
    <location>
        <begin position="214"/>
        <end position="223"/>
    </location>
</feature>
<feature type="compositionally biased region" description="Low complexity" evidence="2">
    <location>
        <begin position="244"/>
        <end position="262"/>
    </location>
</feature>
<feature type="compositionally biased region" description="Pro residues" evidence="2">
    <location>
        <begin position="263"/>
        <end position="281"/>
    </location>
</feature>
<name>PBP1_TRYB2</name>
<dbReference type="EMBL" id="AC159448">
    <property type="protein sequence ID" value="AAX70572.1"/>
    <property type="molecule type" value="Genomic_DNA"/>
</dbReference>
<dbReference type="EMBL" id="CP000071">
    <property type="protein sequence ID" value="AAZ13219.1"/>
    <property type="molecule type" value="Genomic_DNA"/>
</dbReference>
<dbReference type="RefSeq" id="XP_847285.1">
    <property type="nucleotide sequence ID" value="XM_842192.1"/>
</dbReference>
<dbReference type="SMR" id="Q57UZ7"/>
<dbReference type="STRING" id="185431.Q57UZ7"/>
<dbReference type="PaxDb" id="5691-AAZ13219"/>
<dbReference type="GeneID" id="3659452"/>
<dbReference type="KEGG" id="tbr:Tb927.8.4540"/>
<dbReference type="VEuPathDB" id="TriTrypDB:Tb927.8.4540"/>
<dbReference type="eggNOG" id="KOG2375">
    <property type="taxonomic scope" value="Eukaryota"/>
</dbReference>
<dbReference type="InParanoid" id="Q57UZ7"/>
<dbReference type="OMA" id="CPTDWPG"/>
<dbReference type="OrthoDB" id="2275718at2759"/>
<dbReference type="Proteomes" id="UP000008524">
    <property type="component" value="Chromosome 8"/>
</dbReference>
<dbReference type="GO" id="GO:0005737">
    <property type="term" value="C:cytoplasm"/>
    <property type="evidence" value="ECO:0000314"/>
    <property type="project" value="GeneDB"/>
</dbReference>
<dbReference type="GO" id="GO:0010494">
    <property type="term" value="C:cytoplasmic stress granule"/>
    <property type="evidence" value="ECO:0000318"/>
    <property type="project" value="GO_Central"/>
</dbReference>
<dbReference type="GO" id="GO:0005829">
    <property type="term" value="C:cytosol"/>
    <property type="evidence" value="ECO:0000314"/>
    <property type="project" value="UniProtKB"/>
</dbReference>
<dbReference type="GO" id="GO:0003729">
    <property type="term" value="F:mRNA binding"/>
    <property type="evidence" value="ECO:0000314"/>
    <property type="project" value="GeneDB"/>
</dbReference>
<dbReference type="GO" id="GO:0140517">
    <property type="term" value="F:protein-RNA adaptor activity"/>
    <property type="evidence" value="ECO:0000314"/>
    <property type="project" value="UniProtKB"/>
</dbReference>
<dbReference type="GO" id="GO:0048255">
    <property type="term" value="P:mRNA stabilization"/>
    <property type="evidence" value="ECO:0000314"/>
    <property type="project" value="UniProtKB"/>
</dbReference>
<dbReference type="GO" id="GO:0010608">
    <property type="term" value="P:post-transcriptional regulation of gene expression"/>
    <property type="evidence" value="ECO:0000314"/>
    <property type="project" value="GeneDB"/>
</dbReference>
<dbReference type="GO" id="GO:0006417">
    <property type="term" value="P:regulation of translation"/>
    <property type="evidence" value="ECO:0007669"/>
    <property type="project" value="UniProtKB-KW"/>
</dbReference>
<dbReference type="GO" id="GO:0034063">
    <property type="term" value="P:stress granule assembly"/>
    <property type="evidence" value="ECO:0000318"/>
    <property type="project" value="GO_Central"/>
</dbReference>
<dbReference type="InterPro" id="IPR045117">
    <property type="entry name" value="ATXN2-like"/>
</dbReference>
<dbReference type="InterPro" id="IPR009604">
    <property type="entry name" value="LsmAD_domain"/>
</dbReference>
<dbReference type="InterPro" id="IPR047575">
    <property type="entry name" value="Sm"/>
</dbReference>
<dbReference type="InterPro" id="IPR025852">
    <property type="entry name" value="SM_dom_ATX"/>
</dbReference>
<dbReference type="PANTHER" id="PTHR12854">
    <property type="entry name" value="ATAXIN 2-RELATED"/>
    <property type="match status" value="1"/>
</dbReference>
<dbReference type="PANTHER" id="PTHR12854:SF7">
    <property type="entry name" value="ATAXIN-2 HOMOLOG"/>
    <property type="match status" value="1"/>
</dbReference>
<dbReference type="Pfam" id="PF06741">
    <property type="entry name" value="LsmAD"/>
    <property type="match status" value="1"/>
</dbReference>
<dbReference type="Pfam" id="PF14438">
    <property type="entry name" value="SM-ATX"/>
    <property type="match status" value="1"/>
</dbReference>
<dbReference type="SMART" id="SM01272">
    <property type="entry name" value="LsmAD"/>
    <property type="match status" value="1"/>
</dbReference>
<dbReference type="PROSITE" id="PS52002">
    <property type="entry name" value="SM"/>
    <property type="match status" value="1"/>
</dbReference>
<organism evidence="10">
    <name type="scientific">Trypanosoma brucei brucei (strain 927/4 GUTat10.1)</name>
    <dbReference type="NCBI Taxonomy" id="185431"/>
    <lineage>
        <taxon>Eukaryota</taxon>
        <taxon>Discoba</taxon>
        <taxon>Euglenozoa</taxon>
        <taxon>Kinetoplastea</taxon>
        <taxon>Metakinetoplastina</taxon>
        <taxon>Trypanosomatida</taxon>
        <taxon>Trypanosomatidae</taxon>
        <taxon>Trypanosoma</taxon>
    </lineage>
</organism>
<accession>Q57UZ7</accession>
<accession>D6XLI9</accession>
<evidence type="ECO:0000255" key="1">
    <source>
        <dbReference type="PROSITE-ProRule" id="PRU01346"/>
    </source>
</evidence>
<evidence type="ECO:0000256" key="2">
    <source>
        <dbReference type="SAM" id="MobiDB-lite"/>
    </source>
</evidence>
<evidence type="ECO:0000269" key="3">
    <source>
    </source>
</evidence>
<evidence type="ECO:0000269" key="4">
    <source>
    </source>
</evidence>
<evidence type="ECO:0000303" key="5">
    <source>
    </source>
</evidence>
<evidence type="ECO:0000303" key="6">
    <source>
    </source>
</evidence>
<evidence type="ECO:0000305" key="7"/>
<evidence type="ECO:0000312" key="8">
    <source>
        <dbReference type="EMBL" id="AAX70572.1"/>
    </source>
</evidence>
<evidence type="ECO:0000312" key="9">
    <source>
        <dbReference type="EMBL" id="AAZ13219.1"/>
    </source>
</evidence>
<evidence type="ECO:0000312" key="10">
    <source>
        <dbReference type="Proteomes" id="UP000008524"/>
    </source>
</evidence>
<sequence>MEGSHSSNMERLEYLYLNLVGQVVQVRLVDDMCVEGLFVACTDVDAETDAGIMICCTRNLASAKRSPLSPSCVNFTDDLFIPYQSIVMIEVQNAKIRTETPGRPDTGRADFSATKFDWADDGVSELLESEPHQTGTWNQFEANEKSFGVKTTYKEEFYTTRLDHSKITEEQRAQADRLAREIESSSTRGIAHRMEREECLHDDEGLDEGQLYSDVHRPQEKKPPYVPPSTGGRKLVNEPPPVPAAAAPATAPTTAPAAAPAPAAAPPAAAPAAAAPPPPPAATSMADDGSMRHKRMNEDPHHMQYDANQTAAGFNPAAAPYTPMKPGAAVPVVDFLASLADAISNNDMCYDCEPHWPGMCNLFYDQDDSSYSQQNYEAAAMPPSHSMNMHMYVNSQPNIPNAHRGYQGPLGRVPHNQSMPMHHMQGQGFHHEMHHHQAFHGMGNYSSQHHNPPIQEYAPHKGQQGVVSRPGMRQGKGGGASRVEPQQPVSANTASSPPPVPTVDSAPNEVKPPAKLQRGRGMAAFTKGDMDGDSGATTNATGGPKKRVGK</sequence>
<reference evidence="9" key="1">
    <citation type="journal article" date="2005" name="Science">
        <title>Comparative genomics of trypanosomatid parasitic protozoa.</title>
        <authorList>
            <person name="El-Sayed N.M."/>
            <person name="Myler P.J."/>
            <person name="Blandin G."/>
            <person name="Berriman M."/>
            <person name="Crabtree J."/>
            <person name="Aggarwal G."/>
            <person name="Caler E."/>
            <person name="Renauld H."/>
            <person name="Worthey E.A."/>
            <person name="Hertz-Fowler C."/>
            <person name="Ghedin E."/>
            <person name="Peacock C."/>
            <person name="Bartholomeu D.C."/>
            <person name="Haas B.J."/>
            <person name="Tran A.N."/>
            <person name="Wortman J.R."/>
            <person name="Alsmark U.C."/>
            <person name="Angiuoli S."/>
            <person name="Anupama A."/>
            <person name="Badger J."/>
            <person name="Bringaud F."/>
            <person name="Cadag E."/>
            <person name="Carlton J.M."/>
            <person name="Cerqueira G.C."/>
            <person name="Creasy T."/>
            <person name="Delcher A.L."/>
            <person name="Djikeng A."/>
            <person name="Embley T.M."/>
            <person name="Hauser C."/>
            <person name="Ivens A.C."/>
            <person name="Kummerfeld S.K."/>
            <person name="Pereira-Leal J.B."/>
            <person name="Nilsson D."/>
            <person name="Peterson J."/>
            <person name="Salzberg S.L."/>
            <person name="Shallom J."/>
            <person name="Silva J.C."/>
            <person name="Sundaram J."/>
            <person name="Westenberger S."/>
            <person name="White O."/>
            <person name="Melville S.E."/>
            <person name="Donelson J.E."/>
            <person name="Andersson B."/>
            <person name="Stuart K.D."/>
            <person name="Hall N."/>
        </authorList>
    </citation>
    <scope>NUCLEOTIDE SEQUENCE [LARGE SCALE GENOMIC DNA]</scope>
    <source>
        <strain evidence="9">927/4 GUTat10.1</strain>
    </source>
</reference>
<reference evidence="10" key="2">
    <citation type="journal article" date="2005" name="Science">
        <title>The genome of the African trypanosome Trypanosoma brucei.</title>
        <authorList>
            <person name="Berriman M."/>
            <person name="Ghedin E."/>
            <person name="Hertz-Fowler C."/>
            <person name="Blandin G."/>
            <person name="Renauld H."/>
            <person name="Bartholomeu D.C."/>
            <person name="Lennard N.J."/>
            <person name="Caler E."/>
            <person name="Hamlin N.E."/>
            <person name="Haas B."/>
            <person name="Bohme U."/>
            <person name="Hannick L."/>
            <person name="Aslett M.A."/>
            <person name="Shallom J."/>
            <person name="Marcello L."/>
            <person name="Hou L."/>
            <person name="Wickstead B."/>
            <person name="Alsmark U.C.M."/>
            <person name="Arrowsmith C."/>
            <person name="Atkin R.J."/>
            <person name="Barron A.J."/>
            <person name="Bringaud F."/>
            <person name="Brooks K."/>
            <person name="Carrington M."/>
            <person name="Cherevach I."/>
            <person name="Chillingworth T.J."/>
            <person name="Churcher C."/>
            <person name="Clark L.N."/>
            <person name="Corton C.H."/>
            <person name="Cronin A."/>
            <person name="Davies R.M."/>
            <person name="Doggett J."/>
            <person name="Djikeng A."/>
            <person name="Feldblyum T."/>
            <person name="Field M.C."/>
            <person name="Fraser A."/>
            <person name="Goodhead I."/>
            <person name="Hance Z."/>
            <person name="Harper D."/>
            <person name="Harris B.R."/>
            <person name="Hauser H."/>
            <person name="Hostetler J."/>
            <person name="Ivens A."/>
            <person name="Jagels K."/>
            <person name="Johnson D."/>
            <person name="Johnson J."/>
            <person name="Jones K."/>
            <person name="Kerhornou A.X."/>
            <person name="Koo H."/>
            <person name="Larke N."/>
            <person name="Landfear S."/>
            <person name="Larkin C."/>
            <person name="Leech V."/>
            <person name="Line A."/>
            <person name="Lord A."/>
            <person name="Macleod A."/>
            <person name="Mooney P.J."/>
            <person name="Moule S."/>
            <person name="Martin D.M."/>
            <person name="Morgan G.W."/>
            <person name="Mungall K."/>
            <person name="Norbertczak H."/>
            <person name="Ormond D."/>
            <person name="Pai G."/>
            <person name="Peacock C.S."/>
            <person name="Peterson J."/>
            <person name="Quail M.A."/>
            <person name="Rabbinowitsch E."/>
            <person name="Rajandream M.A."/>
            <person name="Reitter C."/>
            <person name="Salzberg S.L."/>
            <person name="Sanders M."/>
            <person name="Schobel S."/>
            <person name="Sharp S."/>
            <person name="Simmonds M."/>
            <person name="Simpson A.J."/>
            <person name="Tallon L."/>
            <person name="Turner C.M."/>
            <person name="Tait A."/>
            <person name="Tivey A.R."/>
            <person name="Van Aken S."/>
            <person name="Walker D."/>
            <person name="Wanless D."/>
            <person name="Wang S."/>
            <person name="White B."/>
            <person name="White O."/>
            <person name="Whitehead S."/>
            <person name="Woodward J."/>
            <person name="Wortman J."/>
            <person name="Adams M.D."/>
            <person name="Embley T.M."/>
            <person name="Gull K."/>
            <person name="Ullu E."/>
            <person name="Barry J.D."/>
            <person name="Fairlamb A.H."/>
            <person name="Opperdoes F."/>
            <person name="Barrell B.G."/>
            <person name="Donelson J.E."/>
            <person name="Hall N."/>
            <person name="Fraser C.M."/>
            <person name="Melville S.E."/>
            <person name="El-Sayed N.M.A."/>
        </authorList>
    </citation>
    <scope>NUCLEOTIDE SEQUENCE [LARGE SCALE GENOMIC DNA]</scope>
    <source>
        <strain evidence="10">927/4 GUTat10.1</strain>
    </source>
</reference>
<reference evidence="7" key="3">
    <citation type="journal article" date="2014" name="Nucleic Acids Res.">
        <title>Trypanosome MKT1 and the RNA-binding protein ZC3H11: interactions and potential roles in post-transcriptional regulatory networks.</title>
        <authorList>
            <person name="Singh A."/>
            <person name="Minia I."/>
            <person name="Droll D."/>
            <person name="Fadda A."/>
            <person name="Clayton C."/>
            <person name="Erben E."/>
        </authorList>
    </citation>
    <scope>FUNCTION</scope>
    <scope>INTERACTION WITH MKT1 AND ZC3H11</scope>
    <scope>SUBCELLULAR LOCATION</scope>
    <scope>DEVELOPMENTAL STAGE</scope>
    <scope>IDENTIFICATION BY MASS SPECTROMETRY</scope>
    <source>
        <strain evidence="5">427</strain>
    </source>
</reference>
<reference evidence="7" key="4">
    <citation type="journal article" date="2020" name="J. Biol. Chem.">
        <title>The RNA-associated proteins MKT1 and MKT1L form alternative PBP1-containing complexes in Trypanosoma brucei.</title>
        <authorList>
            <person name="Melo do Nascimento L."/>
            <person name="Terrao M."/>
            <person name="Marucha K.K."/>
            <person name="Liu B."/>
            <person name="Egler F."/>
            <person name="Clayton C."/>
        </authorList>
    </citation>
    <scope>IDENTIFICATION IN A COMPLEX WITH LSM12; XAC1 AND MKT1 OR MKT1L</scope>
    <scope>INTERACTION WITH PBP1</scope>
    <scope>IDENTIFICATION BY MASS SPECTROMETRY</scope>
    <source>
        <strain evidence="6">427</strain>
    </source>
</reference>
<gene>
    <name evidence="5" type="primary">PBP1</name>
    <name evidence="8" type="ORF">Tb927.8.4540</name>
</gene>